<reference key="1">
    <citation type="journal article" date="1999" name="Nature">
        <title>Sequence and analysis of chromosome 4 of the plant Arabidopsis thaliana.</title>
        <authorList>
            <person name="Mayer K.F.X."/>
            <person name="Schueller C."/>
            <person name="Wambutt R."/>
            <person name="Murphy G."/>
            <person name="Volckaert G."/>
            <person name="Pohl T."/>
            <person name="Duesterhoeft A."/>
            <person name="Stiekema W."/>
            <person name="Entian K.-D."/>
            <person name="Terryn N."/>
            <person name="Harris B."/>
            <person name="Ansorge W."/>
            <person name="Brandt P."/>
            <person name="Grivell L.A."/>
            <person name="Rieger M."/>
            <person name="Weichselgartner M."/>
            <person name="de Simone V."/>
            <person name="Obermaier B."/>
            <person name="Mache R."/>
            <person name="Mueller M."/>
            <person name="Kreis M."/>
            <person name="Delseny M."/>
            <person name="Puigdomenech P."/>
            <person name="Watson M."/>
            <person name="Schmidtheini T."/>
            <person name="Reichert B."/>
            <person name="Portetelle D."/>
            <person name="Perez-Alonso M."/>
            <person name="Boutry M."/>
            <person name="Bancroft I."/>
            <person name="Vos P."/>
            <person name="Hoheisel J."/>
            <person name="Zimmermann W."/>
            <person name="Wedler H."/>
            <person name="Ridley P."/>
            <person name="Langham S.-A."/>
            <person name="McCullagh B."/>
            <person name="Bilham L."/>
            <person name="Robben J."/>
            <person name="van der Schueren J."/>
            <person name="Grymonprez B."/>
            <person name="Chuang Y.-J."/>
            <person name="Vandenbussche F."/>
            <person name="Braeken M."/>
            <person name="Weltjens I."/>
            <person name="Voet M."/>
            <person name="Bastiaens I."/>
            <person name="Aert R."/>
            <person name="Defoor E."/>
            <person name="Weitzenegger T."/>
            <person name="Bothe G."/>
            <person name="Ramsperger U."/>
            <person name="Hilbert H."/>
            <person name="Braun M."/>
            <person name="Holzer E."/>
            <person name="Brandt A."/>
            <person name="Peters S."/>
            <person name="van Staveren M."/>
            <person name="Dirkse W."/>
            <person name="Mooijman P."/>
            <person name="Klein Lankhorst R."/>
            <person name="Rose M."/>
            <person name="Hauf J."/>
            <person name="Koetter P."/>
            <person name="Berneiser S."/>
            <person name="Hempel S."/>
            <person name="Feldpausch M."/>
            <person name="Lamberth S."/>
            <person name="Van den Daele H."/>
            <person name="De Keyser A."/>
            <person name="Buysshaert C."/>
            <person name="Gielen J."/>
            <person name="Villarroel R."/>
            <person name="De Clercq R."/>
            <person name="van Montagu M."/>
            <person name="Rogers J."/>
            <person name="Cronin A."/>
            <person name="Quail M.A."/>
            <person name="Bray-Allen S."/>
            <person name="Clark L."/>
            <person name="Doggett J."/>
            <person name="Hall S."/>
            <person name="Kay M."/>
            <person name="Lennard N."/>
            <person name="McLay K."/>
            <person name="Mayes R."/>
            <person name="Pettett A."/>
            <person name="Rajandream M.A."/>
            <person name="Lyne M."/>
            <person name="Benes V."/>
            <person name="Rechmann S."/>
            <person name="Borkova D."/>
            <person name="Bloecker H."/>
            <person name="Scharfe M."/>
            <person name="Grimm M."/>
            <person name="Loehnert T.-H."/>
            <person name="Dose S."/>
            <person name="de Haan M."/>
            <person name="Maarse A.C."/>
            <person name="Schaefer M."/>
            <person name="Mueller-Auer S."/>
            <person name="Gabel C."/>
            <person name="Fuchs M."/>
            <person name="Fartmann B."/>
            <person name="Granderath K."/>
            <person name="Dauner D."/>
            <person name="Herzl A."/>
            <person name="Neumann S."/>
            <person name="Argiriou A."/>
            <person name="Vitale D."/>
            <person name="Liguori R."/>
            <person name="Piravandi E."/>
            <person name="Massenet O."/>
            <person name="Quigley F."/>
            <person name="Clabauld G."/>
            <person name="Muendlein A."/>
            <person name="Felber R."/>
            <person name="Schnabl S."/>
            <person name="Hiller R."/>
            <person name="Schmidt W."/>
            <person name="Lecharny A."/>
            <person name="Aubourg S."/>
            <person name="Chefdor F."/>
            <person name="Cooke R."/>
            <person name="Berger C."/>
            <person name="Monfort A."/>
            <person name="Casacuberta E."/>
            <person name="Gibbons T."/>
            <person name="Weber N."/>
            <person name="Vandenbol M."/>
            <person name="Bargues M."/>
            <person name="Terol J."/>
            <person name="Torres A."/>
            <person name="Perez-Perez A."/>
            <person name="Purnelle B."/>
            <person name="Bent E."/>
            <person name="Johnson S."/>
            <person name="Tacon D."/>
            <person name="Jesse T."/>
            <person name="Heijnen L."/>
            <person name="Schwarz S."/>
            <person name="Scholler P."/>
            <person name="Heber S."/>
            <person name="Francs P."/>
            <person name="Bielke C."/>
            <person name="Frishman D."/>
            <person name="Haase D."/>
            <person name="Lemcke K."/>
            <person name="Mewes H.-W."/>
            <person name="Stocker S."/>
            <person name="Zaccaria P."/>
            <person name="Bevan M."/>
            <person name="Wilson R.K."/>
            <person name="de la Bastide M."/>
            <person name="Habermann K."/>
            <person name="Parnell L."/>
            <person name="Dedhia N."/>
            <person name="Gnoj L."/>
            <person name="Schutz K."/>
            <person name="Huang E."/>
            <person name="Spiegel L."/>
            <person name="Sekhon M."/>
            <person name="Murray J."/>
            <person name="Sheet P."/>
            <person name="Cordes M."/>
            <person name="Abu-Threideh J."/>
            <person name="Stoneking T."/>
            <person name="Kalicki J."/>
            <person name="Graves T."/>
            <person name="Harmon G."/>
            <person name="Edwards J."/>
            <person name="Latreille P."/>
            <person name="Courtney L."/>
            <person name="Cloud J."/>
            <person name="Abbott A."/>
            <person name="Scott K."/>
            <person name="Johnson D."/>
            <person name="Minx P."/>
            <person name="Bentley D."/>
            <person name="Fulton B."/>
            <person name="Miller N."/>
            <person name="Greco T."/>
            <person name="Kemp K."/>
            <person name="Kramer J."/>
            <person name="Fulton L."/>
            <person name="Mardis E."/>
            <person name="Dante M."/>
            <person name="Pepin K."/>
            <person name="Hillier L.W."/>
            <person name="Nelson J."/>
            <person name="Spieth J."/>
            <person name="Ryan E."/>
            <person name="Andrews S."/>
            <person name="Geisel C."/>
            <person name="Layman D."/>
            <person name="Du H."/>
            <person name="Ali J."/>
            <person name="Berghoff A."/>
            <person name="Jones K."/>
            <person name="Drone K."/>
            <person name="Cotton M."/>
            <person name="Joshu C."/>
            <person name="Antonoiu B."/>
            <person name="Zidanic M."/>
            <person name="Strong C."/>
            <person name="Sun H."/>
            <person name="Lamar B."/>
            <person name="Yordan C."/>
            <person name="Ma P."/>
            <person name="Zhong J."/>
            <person name="Preston R."/>
            <person name="Vil D."/>
            <person name="Shekher M."/>
            <person name="Matero A."/>
            <person name="Shah R."/>
            <person name="Swaby I.K."/>
            <person name="O'Shaughnessy A."/>
            <person name="Rodriguez M."/>
            <person name="Hoffman J."/>
            <person name="Till S."/>
            <person name="Granat S."/>
            <person name="Shohdy N."/>
            <person name="Hasegawa A."/>
            <person name="Hameed A."/>
            <person name="Lodhi M."/>
            <person name="Johnson A."/>
            <person name="Chen E."/>
            <person name="Marra M.A."/>
            <person name="Martienssen R."/>
            <person name="McCombie W.R."/>
        </authorList>
    </citation>
    <scope>NUCLEOTIDE SEQUENCE [LARGE SCALE GENOMIC DNA]</scope>
    <source>
        <strain>cv. Columbia</strain>
    </source>
</reference>
<reference key="2">
    <citation type="journal article" date="2017" name="Plant J.">
        <title>Araport11: a complete reannotation of the Arabidopsis thaliana reference genome.</title>
        <authorList>
            <person name="Cheng C.Y."/>
            <person name="Krishnakumar V."/>
            <person name="Chan A.P."/>
            <person name="Thibaud-Nissen F."/>
            <person name="Schobel S."/>
            <person name="Town C.D."/>
        </authorList>
    </citation>
    <scope>GENOME REANNOTATION</scope>
    <source>
        <strain>cv. Columbia</strain>
    </source>
</reference>
<reference key="3">
    <citation type="submission" date="2003-12" db="EMBL/GenBank/DDBJ databases">
        <title>Arabidopsis ORF clones.</title>
        <authorList>
            <person name="Shinn P."/>
            <person name="Chen H."/>
            <person name="Cheuk R.F."/>
            <person name="Kim C.J."/>
            <person name="Ecker J.R."/>
        </authorList>
    </citation>
    <scope>NUCLEOTIDE SEQUENCE [LARGE SCALE MRNA]</scope>
    <source>
        <strain>cv. Columbia</strain>
    </source>
</reference>
<reference key="4">
    <citation type="journal article" date="2003" name="Plant Cell">
        <title>The Arabidopsis basic/helix-loop-helix transcription factor family.</title>
        <authorList>
            <person name="Toledo-Ortiz G."/>
            <person name="Huq E."/>
            <person name="Quail P.H."/>
        </authorList>
    </citation>
    <scope>GENE FAMILY</scope>
    <scope>NOMENCLATURE</scope>
</reference>
<dbReference type="EMBL" id="AL109796">
    <property type="protein sequence ID" value="CAB52462.1"/>
    <property type="molecule type" value="Genomic_DNA"/>
</dbReference>
<dbReference type="EMBL" id="AL161576">
    <property type="protein sequence ID" value="CAB81011.1"/>
    <property type="molecule type" value="Genomic_DNA"/>
</dbReference>
<dbReference type="EMBL" id="CP002687">
    <property type="protein sequence ID" value="AEE85730.1"/>
    <property type="molecule type" value="Genomic_DNA"/>
</dbReference>
<dbReference type="EMBL" id="BT010671">
    <property type="protein sequence ID" value="AAR20728.1"/>
    <property type="molecule type" value="mRNA"/>
</dbReference>
<dbReference type="EMBL" id="BT010967">
    <property type="protein sequence ID" value="AAR24745.1"/>
    <property type="molecule type" value="mRNA"/>
</dbReference>
<dbReference type="PIR" id="T14078">
    <property type="entry name" value="T14078"/>
</dbReference>
<dbReference type="RefSeq" id="NP_194747.1">
    <property type="nucleotide sequence ID" value="NM_119164.3"/>
</dbReference>
<dbReference type="SMR" id="Q9SUM5"/>
<dbReference type="BioGRID" id="14428">
    <property type="interactions" value="10"/>
</dbReference>
<dbReference type="IntAct" id="Q9SUM5">
    <property type="interactions" value="10"/>
</dbReference>
<dbReference type="STRING" id="3702.Q9SUM5"/>
<dbReference type="iPTMnet" id="Q9SUM5"/>
<dbReference type="PaxDb" id="3702-AT4G30180.1"/>
<dbReference type="ProteomicsDB" id="240725"/>
<dbReference type="EnsemblPlants" id="AT4G30180.1">
    <property type="protein sequence ID" value="AT4G30180.1"/>
    <property type="gene ID" value="AT4G30180"/>
</dbReference>
<dbReference type="GeneID" id="829141"/>
<dbReference type="Gramene" id="AT4G30180.1">
    <property type="protein sequence ID" value="AT4G30180.1"/>
    <property type="gene ID" value="AT4G30180"/>
</dbReference>
<dbReference type="KEGG" id="ath:AT4G30180"/>
<dbReference type="Araport" id="AT4G30180"/>
<dbReference type="TAIR" id="AT4G30180"/>
<dbReference type="eggNOG" id="ENOG502SB35">
    <property type="taxonomic scope" value="Eukaryota"/>
</dbReference>
<dbReference type="HOGENOM" id="CLU_1436456_0_0_1"/>
<dbReference type="InParanoid" id="Q9SUM5"/>
<dbReference type="OMA" id="GYAWSNA"/>
<dbReference type="OrthoDB" id="658598at2759"/>
<dbReference type="PhylomeDB" id="Q9SUM5"/>
<dbReference type="PRO" id="PR:Q9SUM5"/>
<dbReference type="Proteomes" id="UP000006548">
    <property type="component" value="Chromosome 4"/>
</dbReference>
<dbReference type="ExpressionAtlas" id="Q9SUM5">
    <property type="expression patterns" value="baseline and differential"/>
</dbReference>
<dbReference type="GO" id="GO:0005634">
    <property type="term" value="C:nucleus"/>
    <property type="evidence" value="ECO:0007669"/>
    <property type="project" value="UniProtKB-SubCell"/>
</dbReference>
<dbReference type="GO" id="GO:0003677">
    <property type="term" value="F:DNA binding"/>
    <property type="evidence" value="ECO:0007669"/>
    <property type="project" value="UniProtKB-KW"/>
</dbReference>
<dbReference type="GO" id="GO:0003700">
    <property type="term" value="F:DNA-binding transcription factor activity"/>
    <property type="evidence" value="ECO:0000250"/>
    <property type="project" value="TAIR"/>
</dbReference>
<dbReference type="GO" id="GO:0006355">
    <property type="term" value="P:regulation of DNA-templated transcription"/>
    <property type="evidence" value="ECO:0000304"/>
    <property type="project" value="TAIR"/>
</dbReference>
<dbReference type="CDD" id="cd11444">
    <property type="entry name" value="bHLH_AtIBH1_like"/>
    <property type="match status" value="1"/>
</dbReference>
<dbReference type="InterPro" id="IPR044549">
    <property type="entry name" value="bHLH_AtIBH1-like"/>
</dbReference>
<dbReference type="InterPro" id="IPR044660">
    <property type="entry name" value="IBH1-like"/>
</dbReference>
<dbReference type="PANTHER" id="PTHR33124:SF42">
    <property type="entry name" value="TRANSCRIPTION FACTOR BHLH146"/>
    <property type="match status" value="1"/>
</dbReference>
<dbReference type="PANTHER" id="PTHR33124">
    <property type="entry name" value="TRANSCRIPTION FACTOR IBH1-LIKE 1"/>
    <property type="match status" value="1"/>
</dbReference>
<sequence>MERQIINRKKRVFSLEPNKNPSAVFTRKYTSHLVPALKKLNMNKNSSKQTVKHEVDMALALSAQEFAWSRFLLQKLSSSSNPTTTTSSSSDGIRILERPDKEGGNEEGGIEERLRELKKLLPGGEEMNVEEMLSEIGNYIKCLELQTIALKSIVQDST</sequence>
<protein>
    <recommendedName>
        <fullName>Transcription factor bHLH146</fullName>
    </recommendedName>
    <alternativeName>
        <fullName>Basic helix-loop-helix protein 146</fullName>
        <shortName>AtbHLH146</shortName>
        <shortName>bHLH 146</shortName>
    </alternativeName>
    <alternativeName>
        <fullName>Transcription factor EN 141</fullName>
    </alternativeName>
    <alternativeName>
        <fullName>bHLH transcription factor bHLH146</fullName>
    </alternativeName>
</protein>
<organism>
    <name type="scientific">Arabidopsis thaliana</name>
    <name type="common">Mouse-ear cress</name>
    <dbReference type="NCBI Taxonomy" id="3702"/>
    <lineage>
        <taxon>Eukaryota</taxon>
        <taxon>Viridiplantae</taxon>
        <taxon>Streptophyta</taxon>
        <taxon>Embryophyta</taxon>
        <taxon>Tracheophyta</taxon>
        <taxon>Spermatophyta</taxon>
        <taxon>Magnoliopsida</taxon>
        <taxon>eudicotyledons</taxon>
        <taxon>Gunneridae</taxon>
        <taxon>Pentapetalae</taxon>
        <taxon>rosids</taxon>
        <taxon>malvids</taxon>
        <taxon>Brassicales</taxon>
        <taxon>Brassicaceae</taxon>
        <taxon>Camelineae</taxon>
        <taxon>Arabidopsis</taxon>
    </lineage>
</organism>
<gene>
    <name type="primary">BHLH146</name>
    <name type="synonym">EN141</name>
    <name type="ordered locus">At4g30180</name>
    <name type="ORF">F9N11.30</name>
</gene>
<evidence type="ECO:0000256" key="1">
    <source>
        <dbReference type="SAM" id="MobiDB-lite"/>
    </source>
</evidence>
<evidence type="ECO:0000305" key="2"/>
<comment type="subcellular location">
    <subcellularLocation>
        <location evidence="2">Nucleus</location>
    </subcellularLocation>
</comment>
<comment type="similarity">
    <text evidence="2">Belongs to the bHLH protein family.</text>
</comment>
<name>BH146_ARATH</name>
<keyword id="KW-0238">DNA-binding</keyword>
<keyword id="KW-0539">Nucleus</keyword>
<keyword id="KW-1185">Reference proteome</keyword>
<keyword id="KW-0804">Transcription</keyword>
<keyword id="KW-0805">Transcription regulation</keyword>
<feature type="chain" id="PRO_0000358838" description="Transcription factor bHLH146">
    <location>
        <begin position="1"/>
        <end position="158"/>
    </location>
</feature>
<feature type="domain" description="bHLH; atypical" evidence="2">
    <location>
        <begin position="94"/>
        <end position="143"/>
    </location>
</feature>
<feature type="region of interest" description="Disordered" evidence="1">
    <location>
        <begin position="77"/>
        <end position="110"/>
    </location>
</feature>
<feature type="compositionally biased region" description="Low complexity" evidence="1">
    <location>
        <begin position="77"/>
        <end position="90"/>
    </location>
</feature>
<feature type="compositionally biased region" description="Basic and acidic residues" evidence="1">
    <location>
        <begin position="94"/>
        <end position="110"/>
    </location>
</feature>
<accession>Q9SUM5</accession>
<proteinExistence type="evidence at transcript level"/>